<keyword id="KW-0042">Antenna complex</keyword>
<keyword id="KW-0089">Bile pigment</keyword>
<keyword id="KW-0157">Chromophore</keyword>
<keyword id="KW-0194">Cyanelle</keyword>
<keyword id="KW-0249">Electron transport</keyword>
<keyword id="KW-0472">Membrane</keyword>
<keyword id="KW-0488">Methylation</keyword>
<keyword id="KW-0602">Photosynthesis</keyword>
<keyword id="KW-0605">Phycobilisome</keyword>
<keyword id="KW-0934">Plastid</keyword>
<keyword id="KW-0793">Thylakoid</keyword>
<keyword id="KW-0813">Transport</keyword>
<proteinExistence type="inferred from homology"/>
<accession>P05731</accession>
<feature type="chain" id="PRO_0000199144" description="C-phycocyanin beta chain">
    <location>
        <begin position="1"/>
        <end position="172"/>
    </location>
</feature>
<feature type="binding site" description="covalent" evidence="2">
    <location>
        <position position="82"/>
    </location>
    <ligand>
        <name>(2R,3E)-phycocyanobilin</name>
        <dbReference type="ChEBI" id="CHEBI:85275"/>
        <label>1</label>
    </ligand>
</feature>
<feature type="binding site" description="covalent" evidence="2">
    <location>
        <position position="153"/>
    </location>
    <ligand>
        <name>(2R,3E)-phycocyanobilin</name>
        <dbReference type="ChEBI" id="CHEBI:85275"/>
        <label>2</label>
    </ligand>
</feature>
<feature type="modified residue" description="N4-methylasparagine" evidence="2">
    <location>
        <position position="72"/>
    </location>
</feature>
<feature type="sequence conflict" description="In Ref. 4; AAA84138." evidence="3" ref="4">
    <original>AAVV</original>
    <variation>LLLFNF</variation>
    <location>
        <begin position="169"/>
        <end position="172"/>
    </location>
</feature>
<protein>
    <recommendedName>
        <fullName>C-phycocyanin beta chain</fullName>
    </recommendedName>
</protein>
<gene>
    <name type="primary">cpcB</name>
    <name type="synonym">pcyB</name>
</gene>
<dbReference type="EMBL" id="U30821">
    <property type="protein sequence ID" value="AAA81310.1"/>
    <property type="molecule type" value="Genomic_DNA"/>
</dbReference>
<dbReference type="EMBL" id="X02789">
    <property type="protein sequence ID" value="CAA26556.1"/>
    <property type="molecule type" value="Genomic_DNA"/>
</dbReference>
<dbReference type="EMBL" id="K01974">
    <property type="protein sequence ID" value="AAA84138.1"/>
    <property type="molecule type" value="Genomic_DNA"/>
</dbReference>
<dbReference type="PIR" id="T06967">
    <property type="entry name" value="T06967"/>
</dbReference>
<dbReference type="RefSeq" id="NP_043279.1">
    <property type="nucleotide sequence ID" value="NC_001675.1"/>
</dbReference>
<dbReference type="SMR" id="P05731"/>
<dbReference type="GeneID" id="801553"/>
<dbReference type="GO" id="GO:0033115">
    <property type="term" value="C:cyanelle thylakoid membrane"/>
    <property type="evidence" value="ECO:0007669"/>
    <property type="project" value="UniProtKB-SubCell"/>
</dbReference>
<dbReference type="GO" id="GO:0030089">
    <property type="term" value="C:phycobilisome"/>
    <property type="evidence" value="ECO:0007669"/>
    <property type="project" value="UniProtKB-KW"/>
</dbReference>
<dbReference type="GO" id="GO:0015979">
    <property type="term" value="P:photosynthesis"/>
    <property type="evidence" value="ECO:0007669"/>
    <property type="project" value="UniProtKB-KW"/>
</dbReference>
<dbReference type="Gene3D" id="1.10.490.20">
    <property type="entry name" value="Phycocyanins"/>
    <property type="match status" value="1"/>
</dbReference>
<dbReference type="InterPro" id="IPR009050">
    <property type="entry name" value="Globin-like_sf"/>
</dbReference>
<dbReference type="InterPro" id="IPR012128">
    <property type="entry name" value="Phycobilisome_asu/bsu"/>
</dbReference>
<dbReference type="InterPro" id="IPR038719">
    <property type="entry name" value="Phycobilisome_asu/bsu_sf"/>
</dbReference>
<dbReference type="InterPro" id="IPR006247">
    <property type="entry name" value="Phycocyanin_b"/>
</dbReference>
<dbReference type="NCBIfam" id="TIGR01339">
    <property type="entry name" value="phycocy_beta"/>
    <property type="match status" value="1"/>
</dbReference>
<dbReference type="PANTHER" id="PTHR34011:SF7">
    <property type="entry name" value="C-PHYCOCYANIN BETA SUBUNIT"/>
    <property type="match status" value="1"/>
</dbReference>
<dbReference type="PANTHER" id="PTHR34011">
    <property type="entry name" value="PHYCOBILISOME 32.1 KDA LINKER POLYPEPTIDE, PHYCOCYANIN-ASSOCIATED, ROD 2-RELATED"/>
    <property type="match status" value="1"/>
</dbReference>
<dbReference type="Pfam" id="PF00502">
    <property type="entry name" value="Phycobilisome"/>
    <property type="match status" value="1"/>
</dbReference>
<dbReference type="PIRSF" id="PIRSF000081">
    <property type="entry name" value="Phycocyanin"/>
    <property type="match status" value="1"/>
</dbReference>
<dbReference type="SUPFAM" id="SSF46458">
    <property type="entry name" value="Globin-like"/>
    <property type="match status" value="1"/>
</dbReference>
<comment type="function">
    <text>Light-harvesting photosynthetic bile pigment-protein from the phycobiliprotein complex (phycobilisome, PBS). Phycocyanin is the major phycobiliprotein in the PBS rod.</text>
</comment>
<comment type="subunit">
    <text evidence="2">Heterodimer of an alpha and a beta subunit, which further assembles into trimers and the trimers into hexamers. The basic functional unit of phycobiliproteins is a ring-shaped hexamer formed from two back-to-back trimers contacting via the alpha chain subunits. The trimers are composed of alpha/beta subunit heterodimers arranged around a three-fold axis of symmetry. The phycoerythrins also contain a gamma subunit which is located in the center of the hexamer.</text>
</comment>
<comment type="subcellular location">
    <subcellularLocation>
        <location evidence="1">Plastid</location>
        <location evidence="1">Cyanelle thylakoid membrane</location>
        <topology evidence="1">Peripheral membrane protein</topology>
        <orientation evidence="1">Stromal side</orientation>
    </subcellularLocation>
    <text evidence="1">Part of the phycobilisome rod.</text>
</comment>
<comment type="PTM">
    <text evidence="1 2">Contains two covalently linked phycocyanobilin chromophores.</text>
</comment>
<comment type="similarity">
    <text evidence="3">Belongs to the phycobiliprotein family.</text>
</comment>
<name>PHCB_CYAPA</name>
<geneLocation type="cyanelle"/>
<organism>
    <name type="scientific">Cyanophora paradoxa</name>
    <dbReference type="NCBI Taxonomy" id="2762"/>
    <lineage>
        <taxon>Eukaryota</taxon>
        <taxon>Glaucocystophyceae</taxon>
        <taxon>Cyanophoraceae</taxon>
        <taxon>Cyanophora</taxon>
    </lineage>
</organism>
<evidence type="ECO:0000250" key="1"/>
<evidence type="ECO:0000250" key="2">
    <source>
        <dbReference type="UniProtKB" id="P00311"/>
    </source>
</evidence>
<evidence type="ECO:0000305" key="3"/>
<reference key="1">
    <citation type="journal article" date="1995" name="Plant Mol. Biol. Rep.">
        <title>Nucleotide sequence of the cyanelle DNA from Cyanophora paradoxa.</title>
        <authorList>
            <person name="Stirewalt V.L."/>
            <person name="Michalowski C.B."/>
            <person name="Loeffelhardt W."/>
            <person name="Bohnert H.J."/>
            <person name="Bryant D.A."/>
        </authorList>
    </citation>
    <scope>NUCLEOTIDE SEQUENCE [LARGE SCALE GENOMIC DNA]</scope>
    <source>
        <strain>UTEX LB 555 / Pringsheim</strain>
    </source>
</reference>
<reference key="2">
    <citation type="book" date="1997" name="Eukaryotism and symbiosis">
        <title>The complete sequence of the cyanelle genome of Cyanophora paradoxa: the genetic complexity of a primitive plastid.</title>
        <editorList>
            <person name="Schenk H.E.A."/>
            <person name="Herrmann R."/>
            <person name="Jeon K.W."/>
            <person name="Mueller N.E."/>
            <person name="Schwemmler W."/>
        </editorList>
        <authorList>
            <person name="Loeffelhardt W."/>
            <person name="Stirewalt V.L."/>
            <person name="Michalowski C.B."/>
            <person name="Annarella M."/>
            <person name="Farley J.Y."/>
            <person name="Schluchter W.M."/>
            <person name="Chung S."/>
            <person name="Newmann-Spallart C."/>
            <person name="Steiner J.M."/>
            <person name="Jakowitsch J."/>
            <person name="Bohnert H.J."/>
            <person name="Bryant D.A."/>
        </authorList>
    </citation>
    <scope>NUCLEOTIDE SEQUENCE [LARGE SCALE GENOMIC DNA]</scope>
    <source>
        <strain>UTEX LB 555 / Pringsheim</strain>
    </source>
</reference>
<reference key="3">
    <citation type="journal article" date="1985" name="EMBO J.">
        <title>Major light-harvesting polypeptides encoded in polycistronic transcripts in a eukaryotic alga.</title>
        <authorList>
            <person name="Lemaux P.G."/>
            <person name="Grossman A.R."/>
        </authorList>
    </citation>
    <scope>NUCLEOTIDE SEQUENCE [GENOMIC DNA] OF 1-15</scope>
</reference>
<reference key="4">
    <citation type="journal article" date="1984" name="Proc. Natl. Acad. Sci. U.S.A.">
        <title>Isolation and characterization of a gene for a major light-harvesting polypeptide from Cyanophora paradoxa.</title>
        <authorList>
            <person name="Lemaux P.G."/>
            <person name="Grossman A.R."/>
        </authorList>
    </citation>
    <scope>NUCLEOTIDE SEQUENCE [GENOMIC DNA] OF 144-172</scope>
</reference>
<sequence>MLDAFGKVVAQADARGEFISSAQFDALSKLASEGNKRLDAVQGITASAATIVSSAARSLFAEQPQLIAPGGNAYTNRRVAACLRDLEIVLRYITYATLAGDSSVLDDRCLNGLRETYQALGVPGSSVAVAIQKMKDAAVSVVNDPSGVTVGDCSALASEVASYFDRAAAAVV</sequence>